<organism>
    <name type="scientific">Clostridium perfringens (strain SM101 / Type A)</name>
    <dbReference type="NCBI Taxonomy" id="289380"/>
    <lineage>
        <taxon>Bacteria</taxon>
        <taxon>Bacillati</taxon>
        <taxon>Bacillota</taxon>
        <taxon>Clostridia</taxon>
        <taxon>Eubacteriales</taxon>
        <taxon>Clostridiaceae</taxon>
        <taxon>Clostridium</taxon>
    </lineage>
</organism>
<reference key="1">
    <citation type="journal article" date="2006" name="Genome Res.">
        <title>Skewed genomic variability in strains of the toxigenic bacterial pathogen, Clostridium perfringens.</title>
        <authorList>
            <person name="Myers G.S.A."/>
            <person name="Rasko D.A."/>
            <person name="Cheung J.K."/>
            <person name="Ravel J."/>
            <person name="Seshadri R."/>
            <person name="DeBoy R.T."/>
            <person name="Ren Q."/>
            <person name="Varga J."/>
            <person name="Awad M.M."/>
            <person name="Brinkac L.M."/>
            <person name="Daugherty S.C."/>
            <person name="Haft D.H."/>
            <person name="Dodson R.J."/>
            <person name="Madupu R."/>
            <person name="Nelson W.C."/>
            <person name="Rosovitz M.J."/>
            <person name="Sullivan S.A."/>
            <person name="Khouri H."/>
            <person name="Dimitrov G.I."/>
            <person name="Watkins K.L."/>
            <person name="Mulligan S."/>
            <person name="Benton J."/>
            <person name="Radune D."/>
            <person name="Fisher D.J."/>
            <person name="Atkins H.S."/>
            <person name="Hiscox T."/>
            <person name="Jost B.H."/>
            <person name="Billington S.J."/>
            <person name="Songer J.G."/>
            <person name="McClane B.A."/>
            <person name="Titball R.W."/>
            <person name="Rood J.I."/>
            <person name="Melville S.B."/>
            <person name="Paulsen I.T."/>
        </authorList>
    </citation>
    <scope>NUCLEOTIDE SEQUENCE [LARGE SCALE GENOMIC DNA]</scope>
    <source>
        <strain>SM101 / Type A</strain>
    </source>
</reference>
<keyword id="KW-0143">Chaperone</keyword>
<keyword id="KW-0963">Cytoplasm</keyword>
<keyword id="KW-1015">Disulfide bond</keyword>
<keyword id="KW-0676">Redox-active center</keyword>
<keyword id="KW-0862">Zinc</keyword>
<dbReference type="EMBL" id="CP000312">
    <property type="protein sequence ID" value="ABG85746.1"/>
    <property type="molecule type" value="Genomic_DNA"/>
</dbReference>
<dbReference type="RefSeq" id="WP_011592750.1">
    <property type="nucleotide sequence ID" value="NC_008262.1"/>
</dbReference>
<dbReference type="SMR" id="Q0SRS9"/>
<dbReference type="KEGG" id="cpr:CPR_1868"/>
<dbReference type="Proteomes" id="UP000001824">
    <property type="component" value="Chromosome"/>
</dbReference>
<dbReference type="GO" id="GO:0005737">
    <property type="term" value="C:cytoplasm"/>
    <property type="evidence" value="ECO:0007669"/>
    <property type="project" value="UniProtKB-SubCell"/>
</dbReference>
<dbReference type="GO" id="GO:0044183">
    <property type="term" value="F:protein folding chaperone"/>
    <property type="evidence" value="ECO:0007669"/>
    <property type="project" value="TreeGrafter"/>
</dbReference>
<dbReference type="GO" id="GO:0051082">
    <property type="term" value="F:unfolded protein binding"/>
    <property type="evidence" value="ECO:0007669"/>
    <property type="project" value="UniProtKB-UniRule"/>
</dbReference>
<dbReference type="GO" id="GO:0042026">
    <property type="term" value="P:protein refolding"/>
    <property type="evidence" value="ECO:0007669"/>
    <property type="project" value="TreeGrafter"/>
</dbReference>
<dbReference type="CDD" id="cd00498">
    <property type="entry name" value="Hsp33"/>
    <property type="match status" value="1"/>
</dbReference>
<dbReference type="Gene3D" id="3.55.30.10">
    <property type="entry name" value="Hsp33 domain"/>
    <property type="match status" value="1"/>
</dbReference>
<dbReference type="Gene3D" id="3.90.1280.10">
    <property type="entry name" value="HSP33 redox switch-like"/>
    <property type="match status" value="1"/>
</dbReference>
<dbReference type="HAMAP" id="MF_00117">
    <property type="entry name" value="HslO"/>
    <property type="match status" value="1"/>
</dbReference>
<dbReference type="InterPro" id="IPR000397">
    <property type="entry name" value="Heat_shock_Hsp33"/>
</dbReference>
<dbReference type="InterPro" id="IPR016154">
    <property type="entry name" value="Heat_shock_Hsp33_C"/>
</dbReference>
<dbReference type="InterPro" id="IPR016153">
    <property type="entry name" value="Heat_shock_Hsp33_N"/>
</dbReference>
<dbReference type="NCBIfam" id="NF001033">
    <property type="entry name" value="PRK00114.1"/>
    <property type="match status" value="1"/>
</dbReference>
<dbReference type="PANTHER" id="PTHR30111">
    <property type="entry name" value="33 KDA CHAPERONIN"/>
    <property type="match status" value="1"/>
</dbReference>
<dbReference type="PANTHER" id="PTHR30111:SF1">
    <property type="entry name" value="33 KDA CHAPERONIN"/>
    <property type="match status" value="1"/>
</dbReference>
<dbReference type="Pfam" id="PF01430">
    <property type="entry name" value="HSP33"/>
    <property type="match status" value="1"/>
</dbReference>
<dbReference type="PIRSF" id="PIRSF005261">
    <property type="entry name" value="Heat_shock_Hsp33"/>
    <property type="match status" value="1"/>
</dbReference>
<dbReference type="SUPFAM" id="SSF64397">
    <property type="entry name" value="Hsp33 domain"/>
    <property type="match status" value="1"/>
</dbReference>
<dbReference type="SUPFAM" id="SSF118352">
    <property type="entry name" value="HSP33 redox switch-like"/>
    <property type="match status" value="1"/>
</dbReference>
<comment type="function">
    <text evidence="1">Redox regulated molecular chaperone. Protects both thermally unfolding and oxidatively damaged proteins from irreversible aggregation. Plays an important role in the bacterial defense system toward oxidative stress.</text>
</comment>
<comment type="subcellular location">
    <subcellularLocation>
        <location evidence="1">Cytoplasm</location>
    </subcellularLocation>
</comment>
<comment type="PTM">
    <text evidence="1">Under oxidizing conditions two disulfide bonds are formed involving the reactive cysteines. Under reducing conditions zinc is bound to the reactive cysteines and the protein is inactive.</text>
</comment>
<comment type="similarity">
    <text evidence="1">Belongs to the HSP33 family.</text>
</comment>
<proteinExistence type="inferred from homology"/>
<protein>
    <recommendedName>
        <fullName evidence="1">33 kDa chaperonin</fullName>
    </recommendedName>
    <alternativeName>
        <fullName evidence="1">Heat shock protein 33 homolog</fullName>
        <shortName evidence="1">HSP33</shortName>
    </alternativeName>
</protein>
<name>HSLO_CLOPS</name>
<sequence length="316" mass="34676">MSDKLIRAIAKDGMIRIFATETTELVNEASKIHDCTPTAAAALGRMLTAGTMMGAMLKSDKEVVTLQINGGGMAKGVTVTAYSDCSVKGYIGNPHVDLPLNTENGKLNVGEAIGKNGGLTVIKDLGLKDPYVGQVPIYSGEIAEDLAYYFTASEQIPSAVALGVLVDRDHSIKKAGGFIIQLLPGADELLGDLLTYRLDEIPSLTTMLSEGKTIEEVIEFIFDGMDLKILEEETPKYKCDCSREKVERALLSIGYKDLKELYDEGKEEELKCHFCNKAYKFTKEDIGKLLEEKEKSIADEVSEEMKKAEEKEKNKK</sequence>
<accession>Q0SRS9</accession>
<gene>
    <name evidence="1" type="primary">hslO</name>
    <name type="ordered locus">CPR_1868</name>
</gene>
<evidence type="ECO:0000255" key="1">
    <source>
        <dbReference type="HAMAP-Rule" id="MF_00117"/>
    </source>
</evidence>
<feature type="chain" id="PRO_1000015539" description="33 kDa chaperonin">
    <location>
        <begin position="1"/>
        <end position="316"/>
    </location>
</feature>
<feature type="disulfide bond" description="Redox-active" evidence="1">
    <location>
        <begin position="239"/>
        <end position="241"/>
    </location>
</feature>
<feature type="disulfide bond" description="Redox-active" evidence="1">
    <location>
        <begin position="272"/>
        <end position="275"/>
    </location>
</feature>